<accession>Q60396</accession>
<evidence type="ECO:0000255" key="1"/>
<evidence type="ECO:0000305" key="2"/>
<protein>
    <recommendedName>
        <fullName>Serine proteinase inhibitor 2.4</fullName>
    </recommendedName>
</protein>
<name>SPI24_APOSY</name>
<sequence>MAFIAALGIFMAGICPAVLCFPNGTLGRDTAVQEDQDNGTQVDSLTLASINTDFAFSLYKELALKNPDKNIVFSPLSISAALAIVSLGAKCNTLQEILEGLKFNLTETPEADIHLGFRHLLHMLSQSGKEEQINIAVSMFIEKHLQILAEFQEKVRSLYQAEAFTADFQQADEARKFINDYVRKETQGKIQELLSDLVERTSMVLVNYIYFKGKWKMPFDPRVTLKSEFYLDEKRSVKVPMMKIEDLTTPYFRDEELSCSVVELKYIGNASALFILPDQGRIEQVEASLQPETLRKWKDSLRPRKIDLLYLPKFLVSTDYSLEDVLSELGIKEVFSAQADLSRVTGTKDLSVSQVVHKAMLEVAEKGTEAAAATGVKFVFRSGRVPTMTVRFDRPFLMVVSHTGVESILFLAKVTNPN</sequence>
<organism>
    <name type="scientific">Apodemus sylvaticus</name>
    <name type="common">European woodmouse</name>
    <dbReference type="NCBI Taxonomy" id="10129"/>
    <lineage>
        <taxon>Eukaryota</taxon>
        <taxon>Metazoa</taxon>
        <taxon>Chordata</taxon>
        <taxon>Craniata</taxon>
        <taxon>Vertebrata</taxon>
        <taxon>Euteleostomi</taxon>
        <taxon>Mammalia</taxon>
        <taxon>Eutheria</taxon>
        <taxon>Euarchontoglires</taxon>
        <taxon>Glires</taxon>
        <taxon>Rodentia</taxon>
        <taxon>Myomorpha</taxon>
        <taxon>Muroidea</taxon>
        <taxon>Muridae</taxon>
        <taxon>Murinae</taxon>
        <taxon>Apodemus</taxon>
        <taxon>Sylvaemus group</taxon>
    </lineage>
</organism>
<feature type="signal peptide" evidence="1">
    <location>
        <begin position="1"/>
        <end position="28"/>
    </location>
</feature>
<feature type="chain" id="PRO_0000032530" description="Serine proteinase inhibitor 2.4">
    <location>
        <begin position="29"/>
        <end position="418"/>
    </location>
</feature>
<feature type="site" description="Reactive bond" evidence="1">
    <location>
        <begin position="381"/>
        <end position="382"/>
    </location>
</feature>
<feature type="glycosylation site" description="N-linked (GlcNAc...) asparagine" evidence="1">
    <location>
        <position position="23"/>
    </location>
</feature>
<feature type="glycosylation site" description="N-linked (GlcNAc...) asparagine" evidence="1">
    <location>
        <position position="38"/>
    </location>
</feature>
<feature type="glycosylation site" description="N-linked (GlcNAc...) asparagine" evidence="1">
    <location>
        <position position="104"/>
    </location>
</feature>
<feature type="glycosylation site" description="N-linked (GlcNAc...) asparagine" evidence="1">
    <location>
        <position position="269"/>
    </location>
</feature>
<proteinExistence type="evidence at transcript level"/>
<comment type="subcellular location">
    <subcellularLocation>
        <location evidence="2">Secreted</location>
    </subcellularLocation>
</comment>
<comment type="similarity">
    <text evidence="2">Belongs to the serpin family.</text>
</comment>
<reference key="1">
    <citation type="submission" date="1992-12" db="EMBL/GenBank/DDBJ databases">
        <authorList>
            <person name="Inglis J.D."/>
        </authorList>
    </citation>
    <scope>NUCLEOTIDE SEQUENCE [MRNA]</scope>
    <source>
        <tissue>Liver</tissue>
    </source>
</reference>
<dbReference type="EMBL" id="X69833">
    <property type="protein sequence ID" value="CAA49487.1"/>
    <property type="molecule type" value="mRNA"/>
</dbReference>
<dbReference type="PIR" id="S31507">
    <property type="entry name" value="S31507"/>
</dbReference>
<dbReference type="SMR" id="Q60396"/>
<dbReference type="MEROPS" id="I04.054"/>
<dbReference type="GO" id="GO:0005615">
    <property type="term" value="C:extracellular space"/>
    <property type="evidence" value="ECO:0007669"/>
    <property type="project" value="InterPro"/>
</dbReference>
<dbReference type="GO" id="GO:0004867">
    <property type="term" value="F:serine-type endopeptidase inhibitor activity"/>
    <property type="evidence" value="ECO:0007669"/>
    <property type="project" value="UniProtKB-KW"/>
</dbReference>
<dbReference type="CDD" id="cd19551">
    <property type="entry name" value="serpinA3_A1AC"/>
    <property type="match status" value="1"/>
</dbReference>
<dbReference type="FunFam" id="3.30.497.10:FF:000001">
    <property type="entry name" value="Serine protease inhibitor"/>
    <property type="match status" value="1"/>
</dbReference>
<dbReference type="FunFam" id="2.30.39.10:FF:000002">
    <property type="entry name" value="Serpin family D member 1"/>
    <property type="match status" value="1"/>
</dbReference>
<dbReference type="Gene3D" id="2.30.39.10">
    <property type="entry name" value="Alpha-1-antitrypsin, domain 1"/>
    <property type="match status" value="1"/>
</dbReference>
<dbReference type="Gene3D" id="3.30.497.10">
    <property type="entry name" value="Antithrombin, subunit I, domain 2"/>
    <property type="match status" value="1"/>
</dbReference>
<dbReference type="InterPro" id="IPR023795">
    <property type="entry name" value="Serpin_CS"/>
</dbReference>
<dbReference type="InterPro" id="IPR023796">
    <property type="entry name" value="Serpin_dom"/>
</dbReference>
<dbReference type="InterPro" id="IPR000215">
    <property type="entry name" value="Serpin_fam"/>
</dbReference>
<dbReference type="InterPro" id="IPR036186">
    <property type="entry name" value="Serpin_sf"/>
</dbReference>
<dbReference type="InterPro" id="IPR042178">
    <property type="entry name" value="Serpin_sf_1"/>
</dbReference>
<dbReference type="InterPro" id="IPR042185">
    <property type="entry name" value="Serpin_sf_2"/>
</dbReference>
<dbReference type="PANTHER" id="PTHR11461:SF195">
    <property type="entry name" value="SERINE PROTEASE INHIBITOR A3A-RELATED"/>
    <property type="match status" value="1"/>
</dbReference>
<dbReference type="PANTHER" id="PTHR11461">
    <property type="entry name" value="SERINE PROTEASE INHIBITOR, SERPIN"/>
    <property type="match status" value="1"/>
</dbReference>
<dbReference type="Pfam" id="PF00079">
    <property type="entry name" value="Serpin"/>
    <property type="match status" value="1"/>
</dbReference>
<dbReference type="SMART" id="SM00093">
    <property type="entry name" value="SERPIN"/>
    <property type="match status" value="1"/>
</dbReference>
<dbReference type="SUPFAM" id="SSF56574">
    <property type="entry name" value="Serpins"/>
    <property type="match status" value="1"/>
</dbReference>
<dbReference type="PROSITE" id="PS00284">
    <property type="entry name" value="SERPIN"/>
    <property type="match status" value="1"/>
</dbReference>
<keyword id="KW-0325">Glycoprotein</keyword>
<keyword id="KW-0646">Protease inhibitor</keyword>
<keyword id="KW-0964">Secreted</keyword>
<keyword id="KW-0722">Serine protease inhibitor</keyword>
<keyword id="KW-0732">Signal</keyword>